<accession>P19910</accession>
<organism>
    <name type="scientific">Serratia marcescens</name>
    <dbReference type="NCBI Taxonomy" id="615"/>
    <lineage>
        <taxon>Bacteria</taxon>
        <taxon>Pseudomonadati</taxon>
        <taxon>Pseudomonadota</taxon>
        <taxon>Gammaproteobacteria</taxon>
        <taxon>Enterobacterales</taxon>
        <taxon>Yersiniaceae</taxon>
        <taxon>Serratia</taxon>
    </lineage>
</organism>
<proteinExistence type="inferred from homology"/>
<sequence>MANPLYHKHIISINDLSRDDLELVLATAAGLKANPQPELLKHKVIASCFFEASTRTRLSFETSMHRLGASVVGFADGSNTSLGKKGETLADTISVISTYVDAIVMRHPQEGARMASEFSGNVPVLNAGDGNQHPTQTLLDLFTIQETQGRLSNLSIAMVGDLKYGRTVHSLTQALAKFEGNRFYFIAPDALAMPAYILKMLEEKGIEYSSHGSIEEVVPELDILYMTRVQKERLDPSEYANVKAQFVLAADLAGAANLKVLHPLPRIDEIATDVDKTPHAYYFQQAGNGIFARSALALVVNADLAL</sequence>
<protein>
    <recommendedName>
        <fullName evidence="2">Aspartate carbamoyltransferase catalytic subunit</fullName>
        <ecNumber evidence="2">2.1.3.2</ecNumber>
    </recommendedName>
    <alternativeName>
        <fullName evidence="2">Aspartate transcarbamylase</fullName>
        <shortName evidence="2">ATCase</shortName>
    </alternativeName>
</protein>
<gene>
    <name evidence="2" type="primary">pyrB</name>
</gene>
<comment type="function">
    <text evidence="2">Catalyzes the condensation of carbamoyl phosphate and aspartate to form carbamoyl aspartate and inorganic phosphate, the committed step in the de novo pyrimidine nucleotide biosynthesis pathway.</text>
</comment>
<comment type="catalytic activity">
    <reaction evidence="2">
        <text>carbamoyl phosphate + L-aspartate = N-carbamoyl-L-aspartate + phosphate + H(+)</text>
        <dbReference type="Rhea" id="RHEA:20013"/>
        <dbReference type="ChEBI" id="CHEBI:15378"/>
        <dbReference type="ChEBI" id="CHEBI:29991"/>
        <dbReference type="ChEBI" id="CHEBI:32814"/>
        <dbReference type="ChEBI" id="CHEBI:43474"/>
        <dbReference type="ChEBI" id="CHEBI:58228"/>
        <dbReference type="EC" id="2.1.3.2"/>
    </reaction>
</comment>
<comment type="pathway">
    <text evidence="2">Pyrimidine metabolism; UMP biosynthesis via de novo pathway; (S)-dihydroorotate from bicarbonate: step 2/3.</text>
</comment>
<comment type="subunit">
    <text evidence="2">Heterododecamer (2C3:3R2) of six catalytic PyrB chains organized as two trimers (C3), and six regulatory PyrI chains organized as three dimers (R2).</text>
</comment>
<comment type="similarity">
    <text evidence="2 3">Belongs to the aspartate/ornithine carbamoyltransferase superfamily. ATCase family.</text>
</comment>
<evidence type="ECO:0000250" key="1"/>
<evidence type="ECO:0000255" key="2">
    <source>
        <dbReference type="HAMAP-Rule" id="MF_00001"/>
    </source>
</evidence>
<evidence type="ECO:0000305" key="3"/>
<name>PYRB_SERMA</name>
<reference key="1">
    <citation type="journal article" date="1989" name="J. Biol. Chem.">
        <title>Comparison of the aspartate transcarbamoylases from Serratia marcescens and Escherichia coli.</title>
        <authorList>
            <person name="Beck D."/>
            <person name="Kedzie K.M."/>
            <person name="Wild J.R."/>
        </authorList>
    </citation>
    <scope>NUCLEOTIDE SEQUENCE [GENOMIC DNA]</scope>
</reference>
<dbReference type="EC" id="2.1.3.2" evidence="2"/>
<dbReference type="EMBL" id="J05033">
    <property type="protein sequence ID" value="AAA26564.1"/>
    <property type="molecule type" value="Genomic_DNA"/>
</dbReference>
<dbReference type="PIR" id="B34396">
    <property type="entry name" value="OWSEAC"/>
</dbReference>
<dbReference type="SMR" id="P19910"/>
<dbReference type="STRING" id="273526.SMDB11_4606"/>
<dbReference type="UniPathway" id="UPA00070">
    <property type="reaction ID" value="UER00116"/>
</dbReference>
<dbReference type="GO" id="GO:0005829">
    <property type="term" value="C:cytosol"/>
    <property type="evidence" value="ECO:0007669"/>
    <property type="project" value="TreeGrafter"/>
</dbReference>
<dbReference type="GO" id="GO:0016597">
    <property type="term" value="F:amino acid binding"/>
    <property type="evidence" value="ECO:0007669"/>
    <property type="project" value="InterPro"/>
</dbReference>
<dbReference type="GO" id="GO:0004070">
    <property type="term" value="F:aspartate carbamoyltransferase activity"/>
    <property type="evidence" value="ECO:0007669"/>
    <property type="project" value="UniProtKB-UniRule"/>
</dbReference>
<dbReference type="GO" id="GO:0006207">
    <property type="term" value="P:'de novo' pyrimidine nucleobase biosynthetic process"/>
    <property type="evidence" value="ECO:0007669"/>
    <property type="project" value="InterPro"/>
</dbReference>
<dbReference type="GO" id="GO:0044205">
    <property type="term" value="P:'de novo' UMP biosynthetic process"/>
    <property type="evidence" value="ECO:0007669"/>
    <property type="project" value="UniProtKB-UniRule"/>
</dbReference>
<dbReference type="GO" id="GO:0006520">
    <property type="term" value="P:amino acid metabolic process"/>
    <property type="evidence" value="ECO:0007669"/>
    <property type="project" value="InterPro"/>
</dbReference>
<dbReference type="FunFam" id="3.40.50.1370:FF:000001">
    <property type="entry name" value="Aspartate carbamoyltransferase"/>
    <property type="match status" value="1"/>
</dbReference>
<dbReference type="FunFam" id="3.40.50.1370:FF:000002">
    <property type="entry name" value="Aspartate carbamoyltransferase 2"/>
    <property type="match status" value="1"/>
</dbReference>
<dbReference type="Gene3D" id="3.40.50.1370">
    <property type="entry name" value="Aspartate/ornithine carbamoyltransferase"/>
    <property type="match status" value="2"/>
</dbReference>
<dbReference type="HAMAP" id="MF_00001">
    <property type="entry name" value="Asp_carb_tr"/>
    <property type="match status" value="1"/>
</dbReference>
<dbReference type="InterPro" id="IPR006132">
    <property type="entry name" value="Asp/Orn_carbamoyltranf_P-bd"/>
</dbReference>
<dbReference type="InterPro" id="IPR006130">
    <property type="entry name" value="Asp/Orn_carbamoylTrfase"/>
</dbReference>
<dbReference type="InterPro" id="IPR036901">
    <property type="entry name" value="Asp/Orn_carbamoylTrfase_sf"/>
</dbReference>
<dbReference type="InterPro" id="IPR002082">
    <property type="entry name" value="Asp_carbamoyltransf"/>
</dbReference>
<dbReference type="InterPro" id="IPR006131">
    <property type="entry name" value="Asp_carbamoyltransf_Asp/Orn-bd"/>
</dbReference>
<dbReference type="NCBIfam" id="TIGR00670">
    <property type="entry name" value="asp_carb_tr"/>
    <property type="match status" value="1"/>
</dbReference>
<dbReference type="NCBIfam" id="NF002032">
    <property type="entry name" value="PRK00856.1"/>
    <property type="match status" value="1"/>
</dbReference>
<dbReference type="PANTHER" id="PTHR45753:SF6">
    <property type="entry name" value="ASPARTATE CARBAMOYLTRANSFERASE"/>
    <property type="match status" value="1"/>
</dbReference>
<dbReference type="PANTHER" id="PTHR45753">
    <property type="entry name" value="ORNITHINE CARBAMOYLTRANSFERASE, MITOCHONDRIAL"/>
    <property type="match status" value="1"/>
</dbReference>
<dbReference type="Pfam" id="PF00185">
    <property type="entry name" value="OTCace"/>
    <property type="match status" value="1"/>
</dbReference>
<dbReference type="Pfam" id="PF02729">
    <property type="entry name" value="OTCace_N"/>
    <property type="match status" value="1"/>
</dbReference>
<dbReference type="PRINTS" id="PR00100">
    <property type="entry name" value="AOTCASE"/>
</dbReference>
<dbReference type="PRINTS" id="PR00101">
    <property type="entry name" value="ATCASE"/>
</dbReference>
<dbReference type="SUPFAM" id="SSF53671">
    <property type="entry name" value="Aspartate/ornithine carbamoyltransferase"/>
    <property type="match status" value="1"/>
</dbReference>
<dbReference type="PROSITE" id="PS00097">
    <property type="entry name" value="CARBAMOYLTRANSFERASE"/>
    <property type="match status" value="1"/>
</dbReference>
<feature type="initiator methionine" description="Removed" evidence="1">
    <location>
        <position position="1"/>
    </location>
</feature>
<feature type="chain" id="PRO_0000113190" description="Aspartate carbamoyltransferase catalytic subunit">
    <location>
        <begin position="2"/>
        <end position="306"/>
    </location>
</feature>
<feature type="binding site" evidence="2">
    <location>
        <position position="55"/>
    </location>
    <ligand>
        <name>carbamoyl phosphate</name>
        <dbReference type="ChEBI" id="CHEBI:58228"/>
    </ligand>
</feature>
<feature type="binding site" evidence="2">
    <location>
        <position position="56"/>
    </location>
    <ligand>
        <name>carbamoyl phosphate</name>
        <dbReference type="ChEBI" id="CHEBI:58228"/>
    </ligand>
</feature>
<feature type="binding site" evidence="2">
    <location>
        <position position="85"/>
    </location>
    <ligand>
        <name>L-aspartate</name>
        <dbReference type="ChEBI" id="CHEBI:29991"/>
    </ligand>
</feature>
<feature type="binding site" evidence="2">
    <location>
        <position position="106"/>
    </location>
    <ligand>
        <name>carbamoyl phosphate</name>
        <dbReference type="ChEBI" id="CHEBI:58228"/>
    </ligand>
</feature>
<feature type="binding site" evidence="2">
    <location>
        <position position="133"/>
    </location>
    <ligand>
        <name>carbamoyl phosphate</name>
        <dbReference type="ChEBI" id="CHEBI:58228"/>
    </ligand>
</feature>
<feature type="binding site" evidence="2">
    <location>
        <position position="136"/>
    </location>
    <ligand>
        <name>carbamoyl phosphate</name>
        <dbReference type="ChEBI" id="CHEBI:58228"/>
    </ligand>
</feature>
<feature type="binding site" evidence="2">
    <location>
        <position position="166"/>
    </location>
    <ligand>
        <name>L-aspartate</name>
        <dbReference type="ChEBI" id="CHEBI:29991"/>
    </ligand>
</feature>
<feature type="binding site" evidence="2">
    <location>
        <position position="228"/>
    </location>
    <ligand>
        <name>L-aspartate</name>
        <dbReference type="ChEBI" id="CHEBI:29991"/>
    </ligand>
</feature>
<feature type="binding site" evidence="2">
    <location>
        <position position="264"/>
    </location>
    <ligand>
        <name>carbamoyl phosphate</name>
        <dbReference type="ChEBI" id="CHEBI:58228"/>
    </ligand>
</feature>
<feature type="binding site" evidence="2">
    <location>
        <position position="265"/>
    </location>
    <ligand>
        <name>carbamoyl phosphate</name>
        <dbReference type="ChEBI" id="CHEBI:58228"/>
    </ligand>
</feature>
<keyword id="KW-0665">Pyrimidine biosynthesis</keyword>
<keyword id="KW-0808">Transferase</keyword>